<accession>Q8KAG9</accession>
<protein>
    <recommendedName>
        <fullName evidence="1">Elongation factor G</fullName>
        <shortName evidence="1">EF-G</shortName>
    </recommendedName>
</protein>
<feature type="chain" id="PRO_0000091104" description="Elongation factor G">
    <location>
        <begin position="1"/>
        <end position="704"/>
    </location>
</feature>
<feature type="domain" description="tr-type G">
    <location>
        <begin position="8"/>
        <end position="291"/>
    </location>
</feature>
<feature type="binding site" evidence="1">
    <location>
        <begin position="17"/>
        <end position="24"/>
    </location>
    <ligand>
        <name>GTP</name>
        <dbReference type="ChEBI" id="CHEBI:37565"/>
    </ligand>
</feature>
<feature type="binding site" evidence="1">
    <location>
        <begin position="90"/>
        <end position="94"/>
    </location>
    <ligand>
        <name>GTP</name>
        <dbReference type="ChEBI" id="CHEBI:37565"/>
    </ligand>
</feature>
<feature type="binding site" evidence="1">
    <location>
        <begin position="144"/>
        <end position="147"/>
    </location>
    <ligand>
        <name>GTP</name>
        <dbReference type="ChEBI" id="CHEBI:37565"/>
    </ligand>
</feature>
<keyword id="KW-0963">Cytoplasm</keyword>
<keyword id="KW-0251">Elongation factor</keyword>
<keyword id="KW-0342">GTP-binding</keyword>
<keyword id="KW-0547">Nucleotide-binding</keyword>
<keyword id="KW-0648">Protein biosynthesis</keyword>
<keyword id="KW-1185">Reference proteome</keyword>
<gene>
    <name evidence="1" type="primary">fusA-1</name>
    <name type="ordered locus">CT2192</name>
</gene>
<evidence type="ECO:0000255" key="1">
    <source>
        <dbReference type="HAMAP-Rule" id="MF_00054"/>
    </source>
</evidence>
<name>EFG_CHLTE</name>
<reference key="1">
    <citation type="journal article" date="2002" name="Proc. Natl. Acad. Sci. U.S.A.">
        <title>The complete genome sequence of Chlorobium tepidum TLS, a photosynthetic, anaerobic, green-sulfur bacterium.</title>
        <authorList>
            <person name="Eisen J.A."/>
            <person name="Nelson K.E."/>
            <person name="Paulsen I.T."/>
            <person name="Heidelberg J.F."/>
            <person name="Wu M."/>
            <person name="Dodson R.J."/>
            <person name="DeBoy R.T."/>
            <person name="Gwinn M.L."/>
            <person name="Nelson W.C."/>
            <person name="Haft D.H."/>
            <person name="Hickey E.K."/>
            <person name="Peterson J.D."/>
            <person name="Durkin A.S."/>
            <person name="Kolonay J.F."/>
            <person name="Yang F."/>
            <person name="Holt I.E."/>
            <person name="Umayam L.A."/>
            <person name="Mason T.M."/>
            <person name="Brenner M."/>
            <person name="Shea T.P."/>
            <person name="Parksey D.S."/>
            <person name="Nierman W.C."/>
            <person name="Feldblyum T.V."/>
            <person name="Hansen C.L."/>
            <person name="Craven M.B."/>
            <person name="Radune D."/>
            <person name="Vamathevan J.J."/>
            <person name="Khouri H.M."/>
            <person name="White O."/>
            <person name="Gruber T.M."/>
            <person name="Ketchum K.A."/>
            <person name="Venter J.C."/>
            <person name="Tettelin H."/>
            <person name="Bryant D.A."/>
            <person name="Fraser C.M."/>
        </authorList>
    </citation>
    <scope>NUCLEOTIDE SEQUENCE [LARGE SCALE GENOMIC DNA]</scope>
    <source>
        <strain>ATCC 49652 / DSM 12025 / NBRC 103806 / TLS</strain>
    </source>
</reference>
<organism>
    <name type="scientific">Chlorobaculum tepidum (strain ATCC 49652 / DSM 12025 / NBRC 103806 / TLS)</name>
    <name type="common">Chlorobium tepidum</name>
    <dbReference type="NCBI Taxonomy" id="194439"/>
    <lineage>
        <taxon>Bacteria</taxon>
        <taxon>Pseudomonadati</taxon>
        <taxon>Chlorobiota</taxon>
        <taxon>Chlorobiia</taxon>
        <taxon>Chlorobiales</taxon>
        <taxon>Chlorobiaceae</taxon>
        <taxon>Chlorobaculum</taxon>
    </lineage>
</organism>
<sequence length="704" mass="77952">MARQVALDRVRNIGIMAHIDAGKTTTTERILYYTGRLHKMGEVHEGGATMDWMEQEKERGITITSAATTCFWTPKYGNYAGLNHRINIIDTPGHVDFTVEVERSLRVLDGAVALFCAVGGVEPQSETVWRQANKYGVPRIAYVNKMDRVGANFFETVKAIRERLGANPVPIQIPIGQGEVFAGFVDLIRMKGIIYDKEDGSTYTEVEIPHDLENEARTWRINMLEAVSELDETLLEKYLNGEDITEEEIRTVLRQATLGVTIVPVLCGSSFKNKGVQFMLDAVIDYLASPVDDGEVEGHDPKTEEPIVRQPKDEEPFAALAFKIATDPFVGKLTFFRVYSGVLNAGSYVLNSTTGKKERVGRVLQMHSNKREERDAVYAGDIAAAVGLKDVRTGDTLCDESKPIVLEKMVFPEPVIEIAVEPKTKADNDKLGMSLAKLAEEDPTFRVKTDEETGQTLIAGMGELHLEILVDRLKREFKVEANVGQPQVAYRETIRGTVEYEGKFVRQSGGKGQFGLVVLRVEPLEEGKGYEFVDEIKGGVIPKEYIPAVNAGIQEAMKDGVVAGFPMQDIKVTLIDGKYHEVDSSEMAFKIAGSIGFKGAAKKANPVLLEPIMKVEVITPEEYLGDVMGDLSGRRGHIEGMGQRAGAQFVSAKVPLSQMFGYSTDLRSMTQGRANYSMEFESYREVPRNIAEALQEKRVGKDSE</sequence>
<dbReference type="EMBL" id="AE006470">
    <property type="protein sequence ID" value="AAM73408.1"/>
    <property type="molecule type" value="Genomic_DNA"/>
</dbReference>
<dbReference type="RefSeq" id="NP_663066.1">
    <property type="nucleotide sequence ID" value="NC_002932.3"/>
</dbReference>
<dbReference type="RefSeq" id="WP_010933845.1">
    <property type="nucleotide sequence ID" value="NC_002932.3"/>
</dbReference>
<dbReference type="SMR" id="Q8KAG9"/>
<dbReference type="STRING" id="194439.CT2192"/>
<dbReference type="EnsemblBacteria" id="AAM73408">
    <property type="protein sequence ID" value="AAM73408"/>
    <property type="gene ID" value="CT2192"/>
</dbReference>
<dbReference type="KEGG" id="cte:CT2192"/>
<dbReference type="PATRIC" id="fig|194439.7.peg.1991"/>
<dbReference type="eggNOG" id="COG0480">
    <property type="taxonomic scope" value="Bacteria"/>
</dbReference>
<dbReference type="HOGENOM" id="CLU_002794_4_1_10"/>
<dbReference type="OrthoDB" id="9801591at2"/>
<dbReference type="Proteomes" id="UP000001007">
    <property type="component" value="Chromosome"/>
</dbReference>
<dbReference type="GO" id="GO:0005737">
    <property type="term" value="C:cytoplasm"/>
    <property type="evidence" value="ECO:0007669"/>
    <property type="project" value="UniProtKB-SubCell"/>
</dbReference>
<dbReference type="GO" id="GO:0005525">
    <property type="term" value="F:GTP binding"/>
    <property type="evidence" value="ECO:0007669"/>
    <property type="project" value="UniProtKB-UniRule"/>
</dbReference>
<dbReference type="GO" id="GO:0003924">
    <property type="term" value="F:GTPase activity"/>
    <property type="evidence" value="ECO:0007669"/>
    <property type="project" value="InterPro"/>
</dbReference>
<dbReference type="GO" id="GO:0003746">
    <property type="term" value="F:translation elongation factor activity"/>
    <property type="evidence" value="ECO:0007669"/>
    <property type="project" value="UniProtKB-UniRule"/>
</dbReference>
<dbReference type="GO" id="GO:0032790">
    <property type="term" value="P:ribosome disassembly"/>
    <property type="evidence" value="ECO:0007669"/>
    <property type="project" value="TreeGrafter"/>
</dbReference>
<dbReference type="CDD" id="cd01886">
    <property type="entry name" value="EF-G"/>
    <property type="match status" value="1"/>
</dbReference>
<dbReference type="CDD" id="cd16262">
    <property type="entry name" value="EFG_III"/>
    <property type="match status" value="1"/>
</dbReference>
<dbReference type="CDD" id="cd01434">
    <property type="entry name" value="EFG_mtEFG1_IV"/>
    <property type="match status" value="1"/>
</dbReference>
<dbReference type="CDD" id="cd03713">
    <property type="entry name" value="EFG_mtEFG_C"/>
    <property type="match status" value="1"/>
</dbReference>
<dbReference type="CDD" id="cd04088">
    <property type="entry name" value="EFG_mtEFG_II"/>
    <property type="match status" value="1"/>
</dbReference>
<dbReference type="FunFam" id="2.40.30.10:FF:000006">
    <property type="entry name" value="Elongation factor G"/>
    <property type="match status" value="1"/>
</dbReference>
<dbReference type="FunFam" id="3.30.230.10:FF:000003">
    <property type="entry name" value="Elongation factor G"/>
    <property type="match status" value="1"/>
</dbReference>
<dbReference type="FunFam" id="3.30.70.240:FF:000001">
    <property type="entry name" value="Elongation factor G"/>
    <property type="match status" value="1"/>
</dbReference>
<dbReference type="FunFam" id="3.30.70.870:FF:000001">
    <property type="entry name" value="Elongation factor G"/>
    <property type="match status" value="1"/>
</dbReference>
<dbReference type="FunFam" id="3.40.50.300:FF:000029">
    <property type="entry name" value="Elongation factor G"/>
    <property type="match status" value="1"/>
</dbReference>
<dbReference type="Gene3D" id="3.30.230.10">
    <property type="match status" value="1"/>
</dbReference>
<dbReference type="Gene3D" id="3.30.70.240">
    <property type="match status" value="1"/>
</dbReference>
<dbReference type="Gene3D" id="3.30.70.870">
    <property type="entry name" value="Elongation Factor G (Translational Gtpase), domain 3"/>
    <property type="match status" value="1"/>
</dbReference>
<dbReference type="Gene3D" id="3.40.50.300">
    <property type="entry name" value="P-loop containing nucleotide triphosphate hydrolases"/>
    <property type="match status" value="1"/>
</dbReference>
<dbReference type="Gene3D" id="2.40.30.10">
    <property type="entry name" value="Translation factors"/>
    <property type="match status" value="1"/>
</dbReference>
<dbReference type="HAMAP" id="MF_00054_B">
    <property type="entry name" value="EF_G_EF_2_B"/>
    <property type="match status" value="1"/>
</dbReference>
<dbReference type="InterPro" id="IPR041095">
    <property type="entry name" value="EFG_II"/>
</dbReference>
<dbReference type="InterPro" id="IPR009022">
    <property type="entry name" value="EFG_III"/>
</dbReference>
<dbReference type="InterPro" id="IPR035647">
    <property type="entry name" value="EFG_III/V"/>
</dbReference>
<dbReference type="InterPro" id="IPR047872">
    <property type="entry name" value="EFG_IV"/>
</dbReference>
<dbReference type="InterPro" id="IPR035649">
    <property type="entry name" value="EFG_V"/>
</dbReference>
<dbReference type="InterPro" id="IPR000640">
    <property type="entry name" value="EFG_V-like"/>
</dbReference>
<dbReference type="InterPro" id="IPR004161">
    <property type="entry name" value="EFTu-like_2"/>
</dbReference>
<dbReference type="InterPro" id="IPR031157">
    <property type="entry name" value="G_TR_CS"/>
</dbReference>
<dbReference type="InterPro" id="IPR027417">
    <property type="entry name" value="P-loop_NTPase"/>
</dbReference>
<dbReference type="InterPro" id="IPR020568">
    <property type="entry name" value="Ribosomal_Su5_D2-typ_SF"/>
</dbReference>
<dbReference type="InterPro" id="IPR014721">
    <property type="entry name" value="Ribsml_uS5_D2-typ_fold_subgr"/>
</dbReference>
<dbReference type="InterPro" id="IPR005225">
    <property type="entry name" value="Small_GTP-bd"/>
</dbReference>
<dbReference type="InterPro" id="IPR000795">
    <property type="entry name" value="T_Tr_GTP-bd_dom"/>
</dbReference>
<dbReference type="InterPro" id="IPR009000">
    <property type="entry name" value="Transl_B-barrel_sf"/>
</dbReference>
<dbReference type="InterPro" id="IPR004540">
    <property type="entry name" value="Transl_elong_EFG/EF2"/>
</dbReference>
<dbReference type="InterPro" id="IPR005517">
    <property type="entry name" value="Transl_elong_EFG/EF2_IV"/>
</dbReference>
<dbReference type="NCBIfam" id="TIGR00484">
    <property type="entry name" value="EF-G"/>
    <property type="match status" value="1"/>
</dbReference>
<dbReference type="NCBIfam" id="NF009379">
    <property type="entry name" value="PRK12740.1-3"/>
    <property type="match status" value="1"/>
</dbReference>
<dbReference type="NCBIfam" id="NF009381">
    <property type="entry name" value="PRK12740.1-5"/>
    <property type="match status" value="1"/>
</dbReference>
<dbReference type="NCBIfam" id="TIGR00231">
    <property type="entry name" value="small_GTP"/>
    <property type="match status" value="1"/>
</dbReference>
<dbReference type="PANTHER" id="PTHR43261:SF1">
    <property type="entry name" value="RIBOSOME-RELEASING FACTOR 2, MITOCHONDRIAL"/>
    <property type="match status" value="1"/>
</dbReference>
<dbReference type="PANTHER" id="PTHR43261">
    <property type="entry name" value="TRANSLATION ELONGATION FACTOR G-RELATED"/>
    <property type="match status" value="1"/>
</dbReference>
<dbReference type="Pfam" id="PF00679">
    <property type="entry name" value="EFG_C"/>
    <property type="match status" value="1"/>
</dbReference>
<dbReference type="Pfam" id="PF14492">
    <property type="entry name" value="EFG_III"/>
    <property type="match status" value="1"/>
</dbReference>
<dbReference type="Pfam" id="PF03764">
    <property type="entry name" value="EFG_IV"/>
    <property type="match status" value="1"/>
</dbReference>
<dbReference type="Pfam" id="PF00009">
    <property type="entry name" value="GTP_EFTU"/>
    <property type="match status" value="1"/>
</dbReference>
<dbReference type="Pfam" id="PF03144">
    <property type="entry name" value="GTP_EFTU_D2"/>
    <property type="match status" value="1"/>
</dbReference>
<dbReference type="PRINTS" id="PR00315">
    <property type="entry name" value="ELONGATNFCT"/>
</dbReference>
<dbReference type="SMART" id="SM00838">
    <property type="entry name" value="EFG_C"/>
    <property type="match status" value="1"/>
</dbReference>
<dbReference type="SMART" id="SM00889">
    <property type="entry name" value="EFG_IV"/>
    <property type="match status" value="1"/>
</dbReference>
<dbReference type="SUPFAM" id="SSF54980">
    <property type="entry name" value="EF-G C-terminal domain-like"/>
    <property type="match status" value="2"/>
</dbReference>
<dbReference type="SUPFAM" id="SSF52540">
    <property type="entry name" value="P-loop containing nucleoside triphosphate hydrolases"/>
    <property type="match status" value="1"/>
</dbReference>
<dbReference type="SUPFAM" id="SSF54211">
    <property type="entry name" value="Ribosomal protein S5 domain 2-like"/>
    <property type="match status" value="1"/>
</dbReference>
<dbReference type="SUPFAM" id="SSF50447">
    <property type="entry name" value="Translation proteins"/>
    <property type="match status" value="1"/>
</dbReference>
<dbReference type="PROSITE" id="PS00301">
    <property type="entry name" value="G_TR_1"/>
    <property type="match status" value="1"/>
</dbReference>
<dbReference type="PROSITE" id="PS51722">
    <property type="entry name" value="G_TR_2"/>
    <property type="match status" value="1"/>
</dbReference>
<proteinExistence type="inferred from homology"/>
<comment type="function">
    <text evidence="1">Catalyzes the GTP-dependent ribosomal translocation step during translation elongation. During this step, the ribosome changes from the pre-translocational (PRE) to the post-translocational (POST) state as the newly formed A-site-bound peptidyl-tRNA and P-site-bound deacylated tRNA move to the P and E sites, respectively. Catalyzes the coordinated movement of the two tRNA molecules, the mRNA and conformational changes in the ribosome.</text>
</comment>
<comment type="subcellular location">
    <subcellularLocation>
        <location evidence="1">Cytoplasm</location>
    </subcellularLocation>
</comment>
<comment type="similarity">
    <text evidence="1">Belongs to the TRAFAC class translation factor GTPase superfamily. Classic translation factor GTPase family. EF-G/EF-2 subfamily.</text>
</comment>